<proteinExistence type="inferred from homology"/>
<comment type="function">
    <text evidence="1">Hydrolyzes RNA 2',3'-cyclic phosphodiester to an RNA 2'-phosphomonoester.</text>
</comment>
<comment type="catalytic activity">
    <reaction evidence="1">
        <text>a 3'-end 2',3'-cyclophospho-ribonucleotide-RNA + H2O = a 3'-end 2'-phospho-ribonucleotide-RNA + H(+)</text>
        <dbReference type="Rhea" id="RHEA:11828"/>
        <dbReference type="Rhea" id="RHEA-COMP:10464"/>
        <dbReference type="Rhea" id="RHEA-COMP:17353"/>
        <dbReference type="ChEBI" id="CHEBI:15377"/>
        <dbReference type="ChEBI" id="CHEBI:15378"/>
        <dbReference type="ChEBI" id="CHEBI:83064"/>
        <dbReference type="ChEBI" id="CHEBI:173113"/>
        <dbReference type="EC" id="3.1.4.58"/>
    </reaction>
</comment>
<comment type="similarity">
    <text evidence="1">Belongs to the 2H phosphoesterase superfamily. ThpR family.</text>
</comment>
<name>THPR_AERPE</name>
<gene>
    <name type="ordered locus">APE_1792</name>
</gene>
<keyword id="KW-0378">Hydrolase</keyword>
<keyword id="KW-1185">Reference proteome</keyword>
<evidence type="ECO:0000255" key="1">
    <source>
        <dbReference type="HAMAP-Rule" id="MF_01940"/>
    </source>
</evidence>
<organism>
    <name type="scientific">Aeropyrum pernix (strain ATCC 700893 / DSM 11879 / JCM 9820 / NBRC 100138 / K1)</name>
    <dbReference type="NCBI Taxonomy" id="272557"/>
    <lineage>
        <taxon>Archaea</taxon>
        <taxon>Thermoproteota</taxon>
        <taxon>Thermoprotei</taxon>
        <taxon>Desulfurococcales</taxon>
        <taxon>Desulfurococcaceae</taxon>
        <taxon>Aeropyrum</taxon>
    </lineage>
</organism>
<accession>Q9YB03</accession>
<dbReference type="EC" id="3.1.4.58" evidence="1"/>
<dbReference type="EMBL" id="BA000002">
    <property type="protein sequence ID" value="BAA80795.1"/>
    <property type="molecule type" value="Genomic_DNA"/>
</dbReference>
<dbReference type="PIR" id="F72563">
    <property type="entry name" value="F72563"/>
</dbReference>
<dbReference type="SMR" id="Q9YB03"/>
<dbReference type="STRING" id="272557.APE_1792"/>
<dbReference type="EnsemblBacteria" id="BAA80795">
    <property type="protein sequence ID" value="BAA80795"/>
    <property type="gene ID" value="APE_1792"/>
</dbReference>
<dbReference type="KEGG" id="ape:APE_1792"/>
<dbReference type="PATRIC" id="fig|272557.25.peg.1201"/>
<dbReference type="eggNOG" id="arCOG01736">
    <property type="taxonomic scope" value="Archaea"/>
</dbReference>
<dbReference type="Proteomes" id="UP000002518">
    <property type="component" value="Chromosome"/>
</dbReference>
<dbReference type="GO" id="GO:0004113">
    <property type="term" value="F:2',3'-cyclic-nucleotide 3'-phosphodiesterase activity"/>
    <property type="evidence" value="ECO:0007669"/>
    <property type="project" value="InterPro"/>
</dbReference>
<dbReference type="GO" id="GO:0008664">
    <property type="term" value="F:RNA 2',3'-cyclic 3'-phosphodiesterase activity"/>
    <property type="evidence" value="ECO:0007669"/>
    <property type="project" value="UniProtKB-EC"/>
</dbReference>
<dbReference type="Gene3D" id="3.90.1140.10">
    <property type="entry name" value="Cyclic phosphodiesterase"/>
    <property type="match status" value="1"/>
</dbReference>
<dbReference type="HAMAP" id="MF_01940">
    <property type="entry name" value="RNA_CPDase"/>
    <property type="match status" value="1"/>
</dbReference>
<dbReference type="InterPro" id="IPR009097">
    <property type="entry name" value="Cyclic_Pdiesterase"/>
</dbReference>
<dbReference type="InterPro" id="IPR014051">
    <property type="entry name" value="Phosphoesterase_HXTX"/>
</dbReference>
<dbReference type="InterPro" id="IPR004175">
    <property type="entry name" value="RNA_CPDase"/>
</dbReference>
<dbReference type="NCBIfam" id="TIGR02258">
    <property type="entry name" value="2_5_ligase"/>
    <property type="match status" value="1"/>
</dbReference>
<dbReference type="PANTHER" id="PTHR35561">
    <property type="entry name" value="RNA 2',3'-CYCLIC PHOSPHODIESTERASE"/>
    <property type="match status" value="1"/>
</dbReference>
<dbReference type="PANTHER" id="PTHR35561:SF1">
    <property type="entry name" value="RNA 2',3'-CYCLIC PHOSPHODIESTERASE"/>
    <property type="match status" value="1"/>
</dbReference>
<dbReference type="Pfam" id="PF02834">
    <property type="entry name" value="LigT_PEase"/>
    <property type="match status" value="2"/>
</dbReference>
<dbReference type="SUPFAM" id="SSF55144">
    <property type="entry name" value="LigT-like"/>
    <property type="match status" value="1"/>
</dbReference>
<feature type="chain" id="PRO_0000138961" description="RNA 2',3'-cyclic phosphodiesterase">
    <location>
        <begin position="1"/>
        <end position="176"/>
    </location>
</feature>
<feature type="short sequence motif" description="HXTX 1" evidence="1">
    <location>
        <begin position="28"/>
        <end position="31"/>
    </location>
</feature>
<feature type="short sequence motif" description="HXTX 2" evidence="1">
    <location>
        <begin position="113"/>
        <end position="116"/>
    </location>
</feature>
<feature type="active site" description="Proton donor" evidence="1">
    <location>
        <position position="28"/>
    </location>
</feature>
<feature type="active site" description="Proton acceptor" evidence="1">
    <location>
        <position position="113"/>
    </location>
</feature>
<reference key="1">
    <citation type="journal article" date="1999" name="DNA Res.">
        <title>Complete genome sequence of an aerobic hyper-thermophilic crenarchaeon, Aeropyrum pernix K1.</title>
        <authorList>
            <person name="Kawarabayasi Y."/>
            <person name="Hino Y."/>
            <person name="Horikawa H."/>
            <person name="Yamazaki S."/>
            <person name="Haikawa Y."/>
            <person name="Jin-no K."/>
            <person name="Takahashi M."/>
            <person name="Sekine M."/>
            <person name="Baba S."/>
            <person name="Ankai A."/>
            <person name="Kosugi H."/>
            <person name="Hosoyama A."/>
            <person name="Fukui S."/>
            <person name="Nagai Y."/>
            <person name="Nishijima K."/>
            <person name="Nakazawa H."/>
            <person name="Takamiya M."/>
            <person name="Masuda S."/>
            <person name="Funahashi T."/>
            <person name="Tanaka T."/>
            <person name="Kudoh Y."/>
            <person name="Yamazaki J."/>
            <person name="Kushida N."/>
            <person name="Oguchi A."/>
            <person name="Aoki K."/>
            <person name="Kubota K."/>
            <person name="Nakamura Y."/>
            <person name="Nomura N."/>
            <person name="Sako Y."/>
            <person name="Kikuchi H."/>
        </authorList>
    </citation>
    <scope>NUCLEOTIDE SEQUENCE [LARGE SCALE GENOMIC DNA]</scope>
    <source>
        <strain>ATCC 700893 / DSM 11879 / JCM 9820 / NBRC 100138 / K1</strain>
    </source>
</reference>
<sequence>MVGRLARLRDSIAHTGVPMKTVEDENFHITLRFIGEVSEPVAAEIGERLASIRFERFRIELRGLGAFPRPDRPRVVWVGVGGGAGELRRIRDEVERILTSMGFSPEKQEFHPHVTLARIKGARNLPALVKLLREMGDVEVGSVEVSSIRLKQSILTRQGPIYKTLYEVKAASSGRV</sequence>
<protein>
    <recommendedName>
        <fullName evidence="1">RNA 2',3'-cyclic phosphodiesterase</fullName>
        <shortName evidence="1">RNA 2',3'-CPDase</shortName>
        <ecNumber evidence="1">3.1.4.58</ecNumber>
    </recommendedName>
</protein>